<gene>
    <name evidence="1" type="primary">M</name>
</gene>
<keyword id="KW-0025">Alternative splicing</keyword>
<keyword id="KW-1015">Disulfide bond</keyword>
<keyword id="KW-0325">Glycoprotein</keyword>
<keyword id="KW-1032">Host cell membrane</keyword>
<keyword id="KW-1043">Host membrane</keyword>
<keyword id="KW-0945">Host-virus interaction</keyword>
<keyword id="KW-0375">Hydrogen ion transport</keyword>
<keyword id="KW-1083">Inhibition of host autophagy by virus</keyword>
<keyword id="KW-0407">Ion channel</keyword>
<keyword id="KW-0406">Ion transport</keyword>
<keyword id="KW-0449">Lipoprotein</keyword>
<keyword id="KW-0472">Membrane</keyword>
<keyword id="KW-0564">Palmitate</keyword>
<keyword id="KW-0597">Phosphoprotein</keyword>
<keyword id="KW-0735">Signal-anchor</keyword>
<keyword id="KW-0812">Transmembrane</keyword>
<keyword id="KW-1133">Transmembrane helix</keyword>
<keyword id="KW-0813">Transport</keyword>
<keyword id="KW-1182">Viral ion channel</keyword>
<keyword id="KW-0946">Virion</keyword>
<evidence type="ECO:0000255" key="1">
    <source>
        <dbReference type="HAMAP-Rule" id="MF_04069"/>
    </source>
</evidence>
<evidence type="ECO:0000256" key="2">
    <source>
        <dbReference type="SAM" id="MobiDB-lite"/>
    </source>
</evidence>
<comment type="function">
    <text evidence="1">Forms a proton-selective ion channel that is necessary for the efficient release of the viral genome during virus entry. After attaching to the cell surface, the virion enters the cell by endocytosis. Acidification of the endosome triggers M2 ion channel activity. The influx of protons into virion interior is believed to disrupt interactions between the viral ribonucleoprotein (RNP), matrix protein 1 (M1), and lipid bilayers, thereby freeing the viral genome from interaction with viral proteins and enabling RNA segments to migrate to the host cell nucleus, where influenza virus RNA transcription and replication occur. Also plays a role in viral proteins secretory pathway. Elevates the intravesicular pH of normally acidic compartments, such as trans-Golgi network, preventing newly formed hemagglutinin from premature switching to the fusion-active conformation.</text>
</comment>
<comment type="activity regulation">
    <text>The M2 protein from most influenza A strains is inhibited by amantadine and rimantadine, resulting in viral uncoating incapacity. Emergence of amantadine-resistant variants is usually rapid.</text>
</comment>
<comment type="subunit">
    <text evidence="1">Homotetramer; composed of two disulfide-linked dimers held together by non-covalent interactions. May interact with matrix protein 1.</text>
</comment>
<comment type="subcellular location">
    <subcellularLocation>
        <location evidence="1">Virion membrane</location>
    </subcellularLocation>
    <subcellularLocation>
        <location evidence="1">Host apical cell membrane</location>
        <topology evidence="1">Single-pass type III membrane protein</topology>
    </subcellularLocation>
    <text evidence="1">Abundantly expressed at the apical plasma membrane in infected polarized epithelial cells, in close proximity to budding and assembled virions. Minor component of virions (only 16-20 molecules/virion).</text>
</comment>
<comment type="alternative products">
    <event type="alternative splicing"/>
    <isoform>
        <id>Q67207-1</id>
        <name>M2</name>
        <sequence type="displayed"/>
    </isoform>
    <isoform>
        <id>Q89562-1</id>
        <name>M1</name>
        <sequence type="external"/>
    </isoform>
    <text>Only the first 9 residues are shared by the 2 isoforms.</text>
</comment>
<comment type="domain">
    <text evidence="1">Cytoplasmic tail plays an important role in virion assembly and morphogenesis.</text>
</comment>
<comment type="miscellaneous">
    <text evidence="1">When the channel is activated, one or more imidazole moieties of His-37 probably become bi-protonated.</text>
</comment>
<comment type="similarity">
    <text evidence="1">Belongs to the influenza viruses matrix protein M2 family.</text>
</comment>
<name>M2_I61A1</name>
<proteinExistence type="inferred from homology"/>
<protein>
    <recommendedName>
        <fullName evidence="1">Matrix protein 2</fullName>
    </recommendedName>
    <alternativeName>
        <fullName evidence="1">Proton channel protein M2</fullName>
    </alternativeName>
</protein>
<organism>
    <name type="scientific">Influenza A virus (strain A/Swine/Wisconsin/1/1961 H1N1)</name>
    <dbReference type="NCBI Taxonomy" id="383533"/>
    <lineage>
        <taxon>Viruses</taxon>
        <taxon>Riboviria</taxon>
        <taxon>Orthornavirae</taxon>
        <taxon>Negarnaviricota</taxon>
        <taxon>Polyploviricotina</taxon>
        <taxon>Insthoviricetes</taxon>
        <taxon>Articulavirales</taxon>
        <taxon>Orthomyxoviridae</taxon>
        <taxon>Alphainfluenzavirus</taxon>
        <taxon>Alphainfluenzavirus influenzae</taxon>
        <taxon>Influenza A virus</taxon>
    </lineage>
</organism>
<sequence length="97" mass="11177">MSLLTEVETPTRSEWGCRCNDSSDPLVAAASIIGILHLILWILDRLFFKCIYRRFKYGLKRGPSTEGVPESMREEYRQKQQSAVDVDDGHFVNIELE</sequence>
<accession>Q67207</accession>
<accession>B3EUQ7</accession>
<reference key="1">
    <citation type="journal article" date="1991" name="J. Virol.">
        <title>Evolutionary analysis of the influenza A virus M gene with comparison of the M1 and M2 proteins.</title>
        <authorList>
            <person name="Ito T."/>
            <person name="Gorman O.T."/>
            <person name="Kawaoka Y."/>
            <person name="Bean W.J."/>
            <person name="Webster R.G."/>
        </authorList>
    </citation>
    <scope>NUCLEOTIDE SEQUENCE [GENOMIC RNA]</scope>
</reference>
<organismHost>
    <name type="scientific">Aves</name>
    <dbReference type="NCBI Taxonomy" id="8782"/>
</organismHost>
<organismHost>
    <name type="scientific">Homo sapiens</name>
    <name type="common">Human</name>
    <dbReference type="NCBI Taxonomy" id="9606"/>
</organismHost>
<organismHost>
    <name type="scientific">Sus scrofa</name>
    <name type="common">Pig</name>
    <dbReference type="NCBI Taxonomy" id="9823"/>
</organismHost>
<feature type="chain" id="PRO_0000326342" description="Matrix protein 2">
    <location>
        <begin position="1"/>
        <end position="97"/>
    </location>
</feature>
<feature type="topological domain" description="Virion surface" evidence="1">
    <location>
        <begin position="1"/>
        <end position="22"/>
    </location>
</feature>
<feature type="transmembrane region" description="Helical; Signal-anchor for type III membrane protein" evidence="1">
    <location>
        <begin position="23"/>
        <end position="43"/>
    </location>
</feature>
<feature type="topological domain" description="Intravirion" evidence="1">
    <location>
        <begin position="44"/>
        <end position="97"/>
    </location>
</feature>
<feature type="region of interest" description="Disordered" evidence="2">
    <location>
        <begin position="60"/>
        <end position="84"/>
    </location>
</feature>
<feature type="site" description="Essential for channel activity, possibly by being protonated during channel activation, and by forming the channel gate and the selective filter" evidence="1">
    <location>
        <position position="37"/>
    </location>
</feature>
<feature type="site" description="Seems to be involved in pH gating" evidence="1">
    <location>
        <position position="41"/>
    </location>
</feature>
<feature type="modified residue" description="Phosphoserine; by host" evidence="1">
    <location>
        <position position="64"/>
    </location>
</feature>
<feature type="modified residue" description="Phosphoserine; by host" evidence="1">
    <location>
        <position position="82"/>
    </location>
</feature>
<feature type="lipid moiety-binding region" description="S-palmitoyl cysteine; by host" evidence="1">
    <location>
        <position position="50"/>
    </location>
</feature>
<feature type="glycosylation site" description="N-linked (GlcNAc...) asparagine; by host" evidence="1">
    <location>
        <position position="20"/>
    </location>
</feature>
<feature type="disulfide bond" description="Interchain (with C-17)" evidence="1">
    <location>
        <position position="17"/>
    </location>
</feature>
<feature type="disulfide bond" description="Interchain (with C-19)" evidence="1">
    <location>
        <position position="19"/>
    </location>
</feature>
<feature type="sequence variant">
    <original>E</original>
    <variation>V</variation>
    <location>
        <position position="95"/>
    </location>
</feature>
<dbReference type="EMBL" id="M63519">
    <property type="protein sequence ID" value="AAA43343.1"/>
    <property type="molecule type" value="Genomic_RNA"/>
</dbReference>
<dbReference type="EMBL" id="CY032214">
    <property type="protein sequence ID" value="ACD85156.1"/>
    <property type="molecule type" value="Viral_cRNA"/>
</dbReference>
<dbReference type="SMR" id="Q67207"/>
<dbReference type="GlyCosmos" id="Q67207">
    <property type="glycosylation" value="1 site, No reported glycans"/>
</dbReference>
<dbReference type="Proteomes" id="UP000007769">
    <property type="component" value="Genome"/>
</dbReference>
<dbReference type="GO" id="GO:0020002">
    <property type="term" value="C:host cell plasma membrane"/>
    <property type="evidence" value="ECO:0007669"/>
    <property type="project" value="UniProtKB-SubCell"/>
</dbReference>
<dbReference type="GO" id="GO:0016020">
    <property type="term" value="C:membrane"/>
    <property type="evidence" value="ECO:0007669"/>
    <property type="project" value="UniProtKB-UniRule"/>
</dbReference>
<dbReference type="GO" id="GO:0055036">
    <property type="term" value="C:virion membrane"/>
    <property type="evidence" value="ECO:0007669"/>
    <property type="project" value="UniProtKB-SubCell"/>
</dbReference>
<dbReference type="GO" id="GO:0005216">
    <property type="term" value="F:monoatomic ion channel activity"/>
    <property type="evidence" value="ECO:0007669"/>
    <property type="project" value="UniProtKB-UniRule"/>
</dbReference>
<dbReference type="GO" id="GO:0015078">
    <property type="term" value="F:proton transmembrane transporter activity"/>
    <property type="evidence" value="ECO:0007669"/>
    <property type="project" value="UniProtKB-UniRule"/>
</dbReference>
<dbReference type="GO" id="GO:0051259">
    <property type="term" value="P:protein complex oligomerization"/>
    <property type="evidence" value="ECO:0007669"/>
    <property type="project" value="UniProtKB-UniRule"/>
</dbReference>
<dbReference type="GO" id="GO:0044694">
    <property type="term" value="P:symbiont genome entry into host cell via pore formation in plasma membrane"/>
    <property type="evidence" value="ECO:0007669"/>
    <property type="project" value="UniProtKB-UniRule"/>
</dbReference>
<dbReference type="GO" id="GO:0140321">
    <property type="term" value="P:symbiont-mediated suppression of host autophagy"/>
    <property type="evidence" value="ECO:0007669"/>
    <property type="project" value="UniProtKB-KW"/>
</dbReference>
<dbReference type="Gene3D" id="6.10.250.1640">
    <property type="match status" value="1"/>
</dbReference>
<dbReference type="HAMAP" id="MF_04069">
    <property type="entry name" value="INFV_M2"/>
    <property type="match status" value="1"/>
</dbReference>
<dbReference type="InterPro" id="IPR002089">
    <property type="entry name" value="Flu_M2"/>
</dbReference>
<dbReference type="Pfam" id="PF00599">
    <property type="entry name" value="Flu_M2"/>
    <property type="match status" value="1"/>
</dbReference>